<keyword id="KW-0326">Glycosidase</keyword>
<keyword id="KW-0378">Hydrolase</keyword>
<keyword id="KW-0964">Secreted</keyword>
<keyword id="KW-0732">Signal</keyword>
<organism>
    <name type="scientific">Staphylococcus aureus (strain MRSA252)</name>
    <dbReference type="NCBI Taxonomy" id="282458"/>
    <lineage>
        <taxon>Bacteria</taxon>
        <taxon>Bacillati</taxon>
        <taxon>Bacillota</taxon>
        <taxon>Bacilli</taxon>
        <taxon>Bacillales</taxon>
        <taxon>Staphylococcaceae</taxon>
        <taxon>Staphylococcus</taxon>
    </lineage>
</organism>
<accession>Q6GEX9</accession>
<protein>
    <recommendedName>
        <fullName>Probable transglycosylase SceD</fullName>
        <ecNumber>3.2.-.-</ecNumber>
    </recommendedName>
</protein>
<gene>
    <name type="primary">sceD</name>
    <name type="ordered locus">SAR2184</name>
</gene>
<dbReference type="EC" id="3.2.-.-"/>
<dbReference type="EMBL" id="BX571856">
    <property type="protein sequence ID" value="CAG41165.1"/>
    <property type="molecule type" value="Genomic_DNA"/>
</dbReference>
<dbReference type="RefSeq" id="WP_000752015.1">
    <property type="nucleotide sequence ID" value="NC_002952.2"/>
</dbReference>
<dbReference type="SMR" id="Q6GEX9"/>
<dbReference type="KEGG" id="sar:SAR2184"/>
<dbReference type="HOGENOM" id="CLU_099865_0_0_9"/>
<dbReference type="Proteomes" id="UP000000596">
    <property type="component" value="Chromosome"/>
</dbReference>
<dbReference type="GO" id="GO:0005576">
    <property type="term" value="C:extracellular region"/>
    <property type="evidence" value="ECO:0007669"/>
    <property type="project" value="UniProtKB-SubCell"/>
</dbReference>
<dbReference type="GO" id="GO:0016798">
    <property type="term" value="F:hydrolase activity, acting on glycosyl bonds"/>
    <property type="evidence" value="ECO:0007669"/>
    <property type="project" value="UniProtKB-KW"/>
</dbReference>
<dbReference type="CDD" id="cd13925">
    <property type="entry name" value="RPF"/>
    <property type="match status" value="1"/>
</dbReference>
<dbReference type="Gene3D" id="1.10.530.10">
    <property type="match status" value="1"/>
</dbReference>
<dbReference type="InterPro" id="IPR023346">
    <property type="entry name" value="Lysozyme-like_dom_sf"/>
</dbReference>
<dbReference type="InterPro" id="IPR010618">
    <property type="entry name" value="RPF"/>
</dbReference>
<dbReference type="Pfam" id="PF06737">
    <property type="entry name" value="Transglycosylas"/>
    <property type="match status" value="1"/>
</dbReference>
<dbReference type="SUPFAM" id="SSF53955">
    <property type="entry name" value="Lysozyme-like"/>
    <property type="match status" value="1"/>
</dbReference>
<reference key="1">
    <citation type="journal article" date="2004" name="Proc. Natl. Acad. Sci. U.S.A.">
        <title>Complete genomes of two clinical Staphylococcus aureus strains: evidence for the rapid evolution of virulence and drug resistance.</title>
        <authorList>
            <person name="Holden M.T.G."/>
            <person name="Feil E.J."/>
            <person name="Lindsay J.A."/>
            <person name="Peacock S.J."/>
            <person name="Day N.P.J."/>
            <person name="Enright M.C."/>
            <person name="Foster T.J."/>
            <person name="Moore C.E."/>
            <person name="Hurst L."/>
            <person name="Atkin R."/>
            <person name="Barron A."/>
            <person name="Bason N."/>
            <person name="Bentley S.D."/>
            <person name="Chillingworth C."/>
            <person name="Chillingworth T."/>
            <person name="Churcher C."/>
            <person name="Clark L."/>
            <person name="Corton C."/>
            <person name="Cronin A."/>
            <person name="Doggett J."/>
            <person name="Dowd L."/>
            <person name="Feltwell T."/>
            <person name="Hance Z."/>
            <person name="Harris B."/>
            <person name="Hauser H."/>
            <person name="Holroyd S."/>
            <person name="Jagels K."/>
            <person name="James K.D."/>
            <person name="Lennard N."/>
            <person name="Line A."/>
            <person name="Mayes R."/>
            <person name="Moule S."/>
            <person name="Mungall K."/>
            <person name="Ormond D."/>
            <person name="Quail M.A."/>
            <person name="Rabbinowitsch E."/>
            <person name="Rutherford K.M."/>
            <person name="Sanders M."/>
            <person name="Sharp S."/>
            <person name="Simmonds M."/>
            <person name="Stevens K."/>
            <person name="Whitehead S."/>
            <person name="Barrell B.G."/>
            <person name="Spratt B.G."/>
            <person name="Parkhill J."/>
        </authorList>
    </citation>
    <scope>NUCLEOTIDE SEQUENCE [LARGE SCALE GENOMIC DNA]</scope>
    <source>
        <strain>MRSA252</strain>
    </source>
</reference>
<sequence>MKKTLLASSLAVGLGIVAGNAGHEAQASEADLNKASLAQMAQSNDQTLNQKPIEAGAYNYTFDYEGFTYHFESDGTHFAWNYHATGANGADMSAQAPATNNVAPSADQSNQVQSQEVEAPQNAQTQQPQASTSNNSQVTATPTESKASEGSSVNVNDHLKQIAQRESGGNIHAVNPTSGAAGKYQFLQSTWDSVAPAKYKGVSPANAPESVQDAAAVKLYNTGGAGHWVTA</sequence>
<name>SCED_STAAR</name>
<feature type="signal peptide" evidence="2">
    <location>
        <begin position="1"/>
        <end position="27"/>
    </location>
</feature>
<feature type="chain" id="PRO_0000320315" description="Probable transglycosylase SceD">
    <location>
        <begin position="28"/>
        <end position="231"/>
    </location>
</feature>
<feature type="region of interest" description="Disordered" evidence="3">
    <location>
        <begin position="92"/>
        <end position="153"/>
    </location>
</feature>
<feature type="compositionally biased region" description="Polar residues" evidence="3">
    <location>
        <begin position="96"/>
        <end position="116"/>
    </location>
</feature>
<feature type="compositionally biased region" description="Low complexity" evidence="3">
    <location>
        <begin position="119"/>
        <end position="137"/>
    </location>
</feature>
<feature type="compositionally biased region" description="Polar residues" evidence="3">
    <location>
        <begin position="138"/>
        <end position="153"/>
    </location>
</feature>
<comment type="function">
    <text evidence="1">Is able to cleave peptidoglycan and affects clumping and separation of bacterial cells.</text>
</comment>
<comment type="subcellular location">
    <subcellularLocation>
        <location evidence="1">Secreted</location>
    </subcellularLocation>
</comment>
<comment type="induction">
    <text evidence="1">Positively regulated by sigma B factor.</text>
</comment>
<comment type="similarity">
    <text evidence="4">Belongs to the transglycosylase family. SceD subfamily.</text>
</comment>
<evidence type="ECO:0000250" key="1"/>
<evidence type="ECO:0000255" key="2"/>
<evidence type="ECO:0000256" key="3">
    <source>
        <dbReference type="SAM" id="MobiDB-lite"/>
    </source>
</evidence>
<evidence type="ECO:0000305" key="4"/>
<proteinExistence type="inferred from homology"/>